<comment type="function">
    <text evidence="1">Part of an energy-coupled inorganic carbon pump.</text>
</comment>
<comment type="cofactor">
    <cofactor evidence="1">
        <name>Zn(2+)</name>
        <dbReference type="ChEBI" id="CHEBI:29105"/>
    </cofactor>
</comment>
<comment type="subunit">
    <text evidence="1">Forms a complex with DabB.</text>
</comment>
<comment type="subcellular location">
    <subcellularLocation>
        <location evidence="1">Cell membrane</location>
        <topology evidence="1">Peripheral membrane protein</topology>
    </subcellularLocation>
</comment>
<comment type="similarity">
    <text evidence="1">Belongs to the inorganic carbon transporter (TC 9.A.2) DabA family.</text>
</comment>
<keyword id="KW-1003">Cell membrane</keyword>
<keyword id="KW-0472">Membrane</keyword>
<keyword id="KW-0479">Metal-binding</keyword>
<keyword id="KW-0813">Transport</keyword>
<keyword id="KW-0862">Zinc</keyword>
<gene>
    <name evidence="1" type="primary">dabA</name>
    <name type="ordered locus">BCAH187_A3197</name>
</gene>
<dbReference type="EMBL" id="CP001177">
    <property type="protein sequence ID" value="ACJ80858.1"/>
    <property type="molecule type" value="Genomic_DNA"/>
</dbReference>
<dbReference type="SMR" id="B7HWR8"/>
<dbReference type="KEGG" id="bcr:BCAH187_A3197"/>
<dbReference type="HOGENOM" id="CLU_009885_0_0_9"/>
<dbReference type="Proteomes" id="UP000002214">
    <property type="component" value="Chromosome"/>
</dbReference>
<dbReference type="GO" id="GO:0005886">
    <property type="term" value="C:plasma membrane"/>
    <property type="evidence" value="ECO:0007669"/>
    <property type="project" value="UniProtKB-SubCell"/>
</dbReference>
<dbReference type="GO" id="GO:0008270">
    <property type="term" value="F:zinc ion binding"/>
    <property type="evidence" value="ECO:0007669"/>
    <property type="project" value="UniProtKB-UniRule"/>
</dbReference>
<dbReference type="HAMAP" id="MF_01871">
    <property type="entry name" value="DabA"/>
    <property type="match status" value="1"/>
</dbReference>
<dbReference type="InterPro" id="IPR018752">
    <property type="entry name" value="DabA"/>
</dbReference>
<dbReference type="PANTHER" id="PTHR38344:SF1">
    <property type="entry name" value="INORGANIC CARBON TRANSPORTER SUBUNIT DABA-RELATED"/>
    <property type="match status" value="1"/>
</dbReference>
<dbReference type="PANTHER" id="PTHR38344">
    <property type="entry name" value="UPF0753 PROTEIN AQ_863"/>
    <property type="match status" value="1"/>
</dbReference>
<dbReference type="Pfam" id="PF10070">
    <property type="entry name" value="DabA"/>
    <property type="match status" value="1"/>
</dbReference>
<sequence>MSIQSIVTKETLKKKDTNIEIQEKNMNDLVESASRVIAPLWPISTFAAHHPWMGLEKQSFEQVANWLKEARNVDIYPSASMIHSAKAKGEIEESFLQIGLSRWLDSQSFHIPRETAERFCQEALKLERLPSSLLSSPELNKLAEEISYINTGSMEDSSMQPISSLIENQKGDNLSDVLNYHIIKWCKLYLDDSGSSWTMPNREKGLYRAWHHLITFDPALSKNERKVLKDWPQDAQGALTKALSELGIPESNRQAYLEGHLLSLPGWAGMIRWRSQQSIKEQALVIEYLAVRISMELAIVKPYLPLKNQKAEKKVSIVPLIASWIYWGDISTREWLQMSATEQSELLAFAYRFDENTRKKLWLEAWEQTHAEQLKKKISSKQRATNDKKRVVAQLAFCIDVRSEPFRRHLEKLGPFETFGIAGFFGLPIATSELGSNNSHPSLPVILKPKHQIKELADENEYKSYEQRKKIDSSVSYTFKTMKKNVLTSMLLPEVSGPLLGLQMITRSFVPRRVGGFIRNLRKNMLQKPNTTFSLNHVHDTKCEIPIGFTKEEKVNYVRQALKMVGLTEKFAPLVVMCGHSSQSTNNPYAAALECGACGGAAGGFNARVFATLCNLPEVREALSAEGIKIPEDTIFAAAEHKTTVDELDWIYVPELSEAAQEAFDNIESVMPNVSQEANRERLTQLPNFKMKIKNPSKEAHRFAEDWSEIRPEWGLARNASFIIGQRELTQDCDLEGRAFLHNYDWKQDENGDILASIIAGPGTVAQWINLQYYASTVAPHYYGSGNKTTQTVTAGLGVMQGNASDLLSGLPWQSVMQSDSETYHSPLRLLIVIQAPTKYIERLLNNDFTFREKVQNGWVRLASVDSEGRWKNW</sequence>
<protein>
    <recommendedName>
        <fullName evidence="1">Probable inorganic carbon transporter subunit DabA</fullName>
    </recommendedName>
</protein>
<accession>B7HWR8</accession>
<organism>
    <name type="scientific">Bacillus cereus (strain AH187)</name>
    <dbReference type="NCBI Taxonomy" id="405534"/>
    <lineage>
        <taxon>Bacteria</taxon>
        <taxon>Bacillati</taxon>
        <taxon>Bacillota</taxon>
        <taxon>Bacilli</taxon>
        <taxon>Bacillales</taxon>
        <taxon>Bacillaceae</taxon>
        <taxon>Bacillus</taxon>
        <taxon>Bacillus cereus group</taxon>
    </lineage>
</organism>
<reference key="1">
    <citation type="submission" date="2008-10" db="EMBL/GenBank/DDBJ databases">
        <title>Genome sequence of Bacillus cereus AH187.</title>
        <authorList>
            <person name="Dodson R.J."/>
            <person name="Durkin A.S."/>
            <person name="Rosovitz M.J."/>
            <person name="Rasko D.A."/>
            <person name="Kolsto A.B."/>
            <person name="Okstad O.A."/>
            <person name="Ravel J."/>
            <person name="Sutton G."/>
        </authorList>
    </citation>
    <scope>NUCLEOTIDE SEQUENCE [LARGE SCALE GENOMIC DNA]</scope>
    <source>
        <strain>AH187</strain>
    </source>
</reference>
<evidence type="ECO:0000255" key="1">
    <source>
        <dbReference type="HAMAP-Rule" id="MF_01871"/>
    </source>
</evidence>
<proteinExistence type="inferred from homology"/>
<feature type="chain" id="PRO_0000387238" description="Probable inorganic carbon transporter subunit DabA">
    <location>
        <begin position="1"/>
        <end position="874"/>
    </location>
</feature>
<feature type="binding site" evidence="1">
    <location>
        <position position="398"/>
    </location>
    <ligand>
        <name>Zn(2+)</name>
        <dbReference type="ChEBI" id="CHEBI:29105"/>
    </ligand>
</feature>
<feature type="binding site" evidence="1">
    <location>
        <position position="400"/>
    </location>
    <ligand>
        <name>Zn(2+)</name>
        <dbReference type="ChEBI" id="CHEBI:29105"/>
    </ligand>
</feature>
<feature type="binding site" evidence="1">
    <location>
        <position position="580"/>
    </location>
    <ligand>
        <name>Zn(2+)</name>
        <dbReference type="ChEBI" id="CHEBI:29105"/>
    </ligand>
</feature>
<feature type="binding site" evidence="1">
    <location>
        <position position="595"/>
    </location>
    <ligand>
        <name>Zn(2+)</name>
        <dbReference type="ChEBI" id="CHEBI:29105"/>
    </ligand>
</feature>
<name>DABA_BACC7</name>